<gene>
    <name evidence="1" type="primary">acpS</name>
    <name type="ordered locus">CT_100</name>
</gene>
<sequence length="119" mass="13275">MFGVGIDIIEIDRIRKSYQTYGDRFLKKIFTEGERVYCFSKSNPYASLAARFAAKEAVAKALGTGIGKLLKWKEIEMCRDSRQPQVVVPEALLCSLGVKRVLLSVSHSREYATAVAIAE</sequence>
<accession>O84102</accession>
<organism>
    <name type="scientific">Chlamydia trachomatis serovar D (strain ATCC VR-885 / DSM 19411 / UW-3/Cx)</name>
    <dbReference type="NCBI Taxonomy" id="272561"/>
    <lineage>
        <taxon>Bacteria</taxon>
        <taxon>Pseudomonadati</taxon>
        <taxon>Chlamydiota</taxon>
        <taxon>Chlamydiia</taxon>
        <taxon>Chlamydiales</taxon>
        <taxon>Chlamydiaceae</taxon>
        <taxon>Chlamydia/Chlamydophila group</taxon>
        <taxon>Chlamydia</taxon>
    </lineage>
</organism>
<name>ACPS_CHLTR</name>
<reference key="1">
    <citation type="journal article" date="1998" name="Science">
        <title>Genome sequence of an obligate intracellular pathogen of humans: Chlamydia trachomatis.</title>
        <authorList>
            <person name="Stephens R.S."/>
            <person name="Kalman S."/>
            <person name="Lammel C.J."/>
            <person name="Fan J."/>
            <person name="Marathe R."/>
            <person name="Aravind L."/>
            <person name="Mitchell W.P."/>
            <person name="Olinger L."/>
            <person name="Tatusov R.L."/>
            <person name="Zhao Q."/>
            <person name="Koonin E.V."/>
            <person name="Davis R.W."/>
        </authorList>
    </citation>
    <scope>NUCLEOTIDE SEQUENCE [LARGE SCALE GENOMIC DNA]</scope>
    <source>
        <strain>ATCC VR-885 / DSM 19411 / UW-3/Cx</strain>
    </source>
</reference>
<proteinExistence type="inferred from homology"/>
<protein>
    <recommendedName>
        <fullName evidence="1">Holo-[acyl-carrier-protein] synthase</fullName>
        <shortName evidence="1">Holo-ACP synthase</shortName>
        <ecNumber evidence="1">2.7.8.7</ecNumber>
    </recommendedName>
    <alternativeName>
        <fullName evidence="1">4'-phosphopantetheinyl transferase AcpS</fullName>
    </alternativeName>
</protein>
<evidence type="ECO:0000255" key="1">
    <source>
        <dbReference type="HAMAP-Rule" id="MF_00101"/>
    </source>
</evidence>
<keyword id="KW-0963">Cytoplasm</keyword>
<keyword id="KW-0275">Fatty acid biosynthesis</keyword>
<keyword id="KW-0276">Fatty acid metabolism</keyword>
<keyword id="KW-0444">Lipid biosynthesis</keyword>
<keyword id="KW-0443">Lipid metabolism</keyword>
<keyword id="KW-0460">Magnesium</keyword>
<keyword id="KW-0479">Metal-binding</keyword>
<keyword id="KW-1185">Reference proteome</keyword>
<keyword id="KW-0808">Transferase</keyword>
<feature type="chain" id="PRO_0000175634" description="Holo-[acyl-carrier-protein] synthase">
    <location>
        <begin position="1"/>
        <end position="119"/>
    </location>
</feature>
<feature type="binding site" evidence="1">
    <location>
        <position position="7"/>
    </location>
    <ligand>
        <name>Mg(2+)</name>
        <dbReference type="ChEBI" id="CHEBI:18420"/>
    </ligand>
</feature>
<feature type="binding site" evidence="1">
    <location>
        <position position="56"/>
    </location>
    <ligand>
        <name>Mg(2+)</name>
        <dbReference type="ChEBI" id="CHEBI:18420"/>
    </ligand>
</feature>
<dbReference type="EC" id="2.7.8.7" evidence="1"/>
<dbReference type="EMBL" id="AE001273">
    <property type="protein sequence ID" value="AAC67691.1"/>
    <property type="molecule type" value="Genomic_DNA"/>
</dbReference>
<dbReference type="PIR" id="C71556">
    <property type="entry name" value="C71556"/>
</dbReference>
<dbReference type="RefSeq" id="NP_219603.1">
    <property type="nucleotide sequence ID" value="NC_000117.1"/>
</dbReference>
<dbReference type="RefSeq" id="WP_009871448.1">
    <property type="nucleotide sequence ID" value="NC_000117.1"/>
</dbReference>
<dbReference type="SMR" id="O84102"/>
<dbReference type="FunCoup" id="O84102">
    <property type="interactions" value="58"/>
</dbReference>
<dbReference type="STRING" id="272561.CT_100"/>
<dbReference type="EnsemblBacteria" id="AAC67691">
    <property type="protein sequence ID" value="AAC67691"/>
    <property type="gene ID" value="CT_100"/>
</dbReference>
<dbReference type="GeneID" id="884180"/>
<dbReference type="KEGG" id="ctr:CT_100"/>
<dbReference type="PATRIC" id="fig|272561.5.peg.110"/>
<dbReference type="HOGENOM" id="CLU_089696_0_2_0"/>
<dbReference type="InParanoid" id="O84102"/>
<dbReference type="OrthoDB" id="517356at2"/>
<dbReference type="Proteomes" id="UP000000431">
    <property type="component" value="Chromosome"/>
</dbReference>
<dbReference type="GO" id="GO:0005737">
    <property type="term" value="C:cytoplasm"/>
    <property type="evidence" value="ECO:0007669"/>
    <property type="project" value="UniProtKB-SubCell"/>
</dbReference>
<dbReference type="GO" id="GO:0008897">
    <property type="term" value="F:holo-[acyl-carrier-protein] synthase activity"/>
    <property type="evidence" value="ECO:0007669"/>
    <property type="project" value="UniProtKB-UniRule"/>
</dbReference>
<dbReference type="GO" id="GO:0000287">
    <property type="term" value="F:magnesium ion binding"/>
    <property type="evidence" value="ECO:0007669"/>
    <property type="project" value="UniProtKB-UniRule"/>
</dbReference>
<dbReference type="GO" id="GO:0006633">
    <property type="term" value="P:fatty acid biosynthetic process"/>
    <property type="evidence" value="ECO:0007669"/>
    <property type="project" value="UniProtKB-UniRule"/>
</dbReference>
<dbReference type="Gene3D" id="3.90.470.20">
    <property type="entry name" value="4'-phosphopantetheinyl transferase domain"/>
    <property type="match status" value="1"/>
</dbReference>
<dbReference type="HAMAP" id="MF_00101">
    <property type="entry name" value="AcpS"/>
    <property type="match status" value="1"/>
</dbReference>
<dbReference type="InterPro" id="IPR008278">
    <property type="entry name" value="4-PPantetheinyl_Trfase_dom"/>
</dbReference>
<dbReference type="InterPro" id="IPR037143">
    <property type="entry name" value="4-PPantetheinyl_Trfase_dom_sf"/>
</dbReference>
<dbReference type="InterPro" id="IPR002582">
    <property type="entry name" value="ACPS"/>
</dbReference>
<dbReference type="InterPro" id="IPR004568">
    <property type="entry name" value="Ppantetheine-prot_Trfase_dom"/>
</dbReference>
<dbReference type="NCBIfam" id="TIGR00516">
    <property type="entry name" value="acpS"/>
    <property type="match status" value="1"/>
</dbReference>
<dbReference type="NCBIfam" id="TIGR00556">
    <property type="entry name" value="pantethn_trn"/>
    <property type="match status" value="1"/>
</dbReference>
<dbReference type="Pfam" id="PF01648">
    <property type="entry name" value="ACPS"/>
    <property type="match status" value="1"/>
</dbReference>
<dbReference type="SUPFAM" id="SSF56214">
    <property type="entry name" value="4'-phosphopantetheinyl transferase"/>
    <property type="match status" value="1"/>
</dbReference>
<comment type="function">
    <text evidence="1">Transfers the 4'-phosphopantetheine moiety from coenzyme A to a Ser of acyl-carrier-protein.</text>
</comment>
<comment type="catalytic activity">
    <reaction evidence="1">
        <text>apo-[ACP] + CoA = holo-[ACP] + adenosine 3',5'-bisphosphate + H(+)</text>
        <dbReference type="Rhea" id="RHEA:12068"/>
        <dbReference type="Rhea" id="RHEA-COMP:9685"/>
        <dbReference type="Rhea" id="RHEA-COMP:9690"/>
        <dbReference type="ChEBI" id="CHEBI:15378"/>
        <dbReference type="ChEBI" id="CHEBI:29999"/>
        <dbReference type="ChEBI" id="CHEBI:57287"/>
        <dbReference type="ChEBI" id="CHEBI:58343"/>
        <dbReference type="ChEBI" id="CHEBI:64479"/>
        <dbReference type="EC" id="2.7.8.7"/>
    </reaction>
</comment>
<comment type="cofactor">
    <cofactor evidence="1">
        <name>Mg(2+)</name>
        <dbReference type="ChEBI" id="CHEBI:18420"/>
    </cofactor>
</comment>
<comment type="subcellular location">
    <subcellularLocation>
        <location evidence="1">Cytoplasm</location>
    </subcellularLocation>
</comment>
<comment type="similarity">
    <text evidence="1">Belongs to the P-Pant transferase superfamily. AcpS family.</text>
</comment>